<accession>Q2KUT2</accession>
<reference key="1">
    <citation type="journal article" date="2006" name="J. Bacteriol.">
        <title>Comparison of the genome sequence of the poultry pathogen Bordetella avium with those of B. bronchiseptica, B. pertussis, and B. parapertussis reveals extensive diversity in surface structures associated with host interaction.</title>
        <authorList>
            <person name="Sebaihia M."/>
            <person name="Preston A."/>
            <person name="Maskell D.J."/>
            <person name="Kuzmiak H."/>
            <person name="Connell T.D."/>
            <person name="King N.D."/>
            <person name="Orndorff P.E."/>
            <person name="Miyamoto D.M."/>
            <person name="Thomson N.R."/>
            <person name="Harris D."/>
            <person name="Goble A."/>
            <person name="Lord A."/>
            <person name="Murphy L."/>
            <person name="Quail M.A."/>
            <person name="Rutter S."/>
            <person name="Squares R."/>
            <person name="Squares S."/>
            <person name="Woodward J."/>
            <person name="Parkhill J."/>
            <person name="Temple L.M."/>
        </authorList>
    </citation>
    <scope>NUCLEOTIDE SEQUENCE [LARGE SCALE GENOMIC DNA]</scope>
    <source>
        <strain>197N</strain>
    </source>
</reference>
<proteinExistence type="inferred from homology"/>
<organism>
    <name type="scientific">Bordetella avium (strain 197N)</name>
    <dbReference type="NCBI Taxonomy" id="360910"/>
    <lineage>
        <taxon>Bacteria</taxon>
        <taxon>Pseudomonadati</taxon>
        <taxon>Pseudomonadota</taxon>
        <taxon>Betaproteobacteria</taxon>
        <taxon>Burkholderiales</taxon>
        <taxon>Alcaligenaceae</taxon>
        <taxon>Bordetella</taxon>
    </lineage>
</organism>
<sequence length="131" mass="14560">MPEETLLAFDFGEKKIGVAIGNTLTCHARPLEIIFSERRDERFGRIQALLEAWRPQRVVVGLALATDGGDQPATLRCRRFANQLHGRFGVTVELVDERGSSMEAQEKLGSHAPDDAMAAAIILQRYLDRLA</sequence>
<comment type="function">
    <text evidence="1">Could be a nuclease involved in processing of the 5'-end of pre-16S rRNA.</text>
</comment>
<comment type="subcellular location">
    <subcellularLocation>
        <location evidence="1">Cytoplasm</location>
    </subcellularLocation>
</comment>
<comment type="similarity">
    <text evidence="1">Belongs to the YqgF nuclease family.</text>
</comment>
<feature type="chain" id="PRO_0000257506" description="Putative pre-16S rRNA nuclease">
    <location>
        <begin position="1"/>
        <end position="131"/>
    </location>
</feature>
<gene>
    <name type="ordered locus">BAV3011</name>
</gene>
<keyword id="KW-0963">Cytoplasm</keyword>
<keyword id="KW-0378">Hydrolase</keyword>
<keyword id="KW-0540">Nuclease</keyword>
<keyword id="KW-1185">Reference proteome</keyword>
<keyword id="KW-0690">Ribosome biogenesis</keyword>
<protein>
    <recommendedName>
        <fullName evidence="1">Putative pre-16S rRNA nuclease</fullName>
        <ecNumber evidence="1">3.1.-.-</ecNumber>
    </recommendedName>
</protein>
<evidence type="ECO:0000255" key="1">
    <source>
        <dbReference type="HAMAP-Rule" id="MF_00651"/>
    </source>
</evidence>
<name>YQGF_BORA1</name>
<dbReference type="EC" id="3.1.-.-" evidence="1"/>
<dbReference type="EMBL" id="AM167904">
    <property type="protein sequence ID" value="CAJ50621.1"/>
    <property type="molecule type" value="Genomic_DNA"/>
</dbReference>
<dbReference type="RefSeq" id="WP_012418650.1">
    <property type="nucleotide sequence ID" value="NC_010645.1"/>
</dbReference>
<dbReference type="SMR" id="Q2KUT2"/>
<dbReference type="STRING" id="360910.BAV3011"/>
<dbReference type="KEGG" id="bav:BAV3011"/>
<dbReference type="eggNOG" id="COG0816">
    <property type="taxonomic scope" value="Bacteria"/>
</dbReference>
<dbReference type="HOGENOM" id="CLU_098240_3_2_4"/>
<dbReference type="OrthoDB" id="9796140at2"/>
<dbReference type="Proteomes" id="UP000001977">
    <property type="component" value="Chromosome"/>
</dbReference>
<dbReference type="GO" id="GO:0005829">
    <property type="term" value="C:cytosol"/>
    <property type="evidence" value="ECO:0007669"/>
    <property type="project" value="TreeGrafter"/>
</dbReference>
<dbReference type="GO" id="GO:0004518">
    <property type="term" value="F:nuclease activity"/>
    <property type="evidence" value="ECO:0007669"/>
    <property type="project" value="UniProtKB-KW"/>
</dbReference>
<dbReference type="GO" id="GO:0000967">
    <property type="term" value="P:rRNA 5'-end processing"/>
    <property type="evidence" value="ECO:0007669"/>
    <property type="project" value="UniProtKB-UniRule"/>
</dbReference>
<dbReference type="CDD" id="cd16964">
    <property type="entry name" value="YqgF"/>
    <property type="match status" value="1"/>
</dbReference>
<dbReference type="Gene3D" id="3.30.420.140">
    <property type="entry name" value="YqgF/RNase H-like domain"/>
    <property type="match status" value="1"/>
</dbReference>
<dbReference type="HAMAP" id="MF_00651">
    <property type="entry name" value="Nuclease_YqgF"/>
    <property type="match status" value="1"/>
</dbReference>
<dbReference type="InterPro" id="IPR012337">
    <property type="entry name" value="RNaseH-like_sf"/>
</dbReference>
<dbReference type="InterPro" id="IPR005227">
    <property type="entry name" value="YqgF"/>
</dbReference>
<dbReference type="InterPro" id="IPR006641">
    <property type="entry name" value="YqgF/RNaseH-like_dom"/>
</dbReference>
<dbReference type="InterPro" id="IPR037027">
    <property type="entry name" value="YqgF/RNaseH-like_dom_sf"/>
</dbReference>
<dbReference type="NCBIfam" id="TIGR00250">
    <property type="entry name" value="RNAse_H_YqgF"/>
    <property type="match status" value="1"/>
</dbReference>
<dbReference type="PANTHER" id="PTHR33317">
    <property type="entry name" value="POLYNUCLEOTIDYL TRANSFERASE, RIBONUCLEASE H-LIKE SUPERFAMILY PROTEIN"/>
    <property type="match status" value="1"/>
</dbReference>
<dbReference type="PANTHER" id="PTHR33317:SF4">
    <property type="entry name" value="POLYNUCLEOTIDYL TRANSFERASE, RIBONUCLEASE H-LIKE SUPERFAMILY PROTEIN"/>
    <property type="match status" value="1"/>
</dbReference>
<dbReference type="Pfam" id="PF03652">
    <property type="entry name" value="RuvX"/>
    <property type="match status" value="1"/>
</dbReference>
<dbReference type="SMART" id="SM00732">
    <property type="entry name" value="YqgFc"/>
    <property type="match status" value="1"/>
</dbReference>
<dbReference type="SUPFAM" id="SSF53098">
    <property type="entry name" value="Ribonuclease H-like"/>
    <property type="match status" value="1"/>
</dbReference>